<reference key="1">
    <citation type="journal article" date="2005" name="Science">
        <title>Micropylar pollen tube guidance by egg apparatus 1 of maize.</title>
        <authorList>
            <person name="Marton M.L."/>
            <person name="Cordts S."/>
            <person name="Broadhvest J."/>
            <person name="Dresselhaus T."/>
        </authorList>
    </citation>
    <scope>NUCLEOTIDE SEQUENCE [GENOMIC DNA]</scope>
    <scope>DEVELOPMENTAL STAGE</scope>
    <scope>TISSUE SPECIFICITY</scope>
    <source>
        <strain>cv. A188</strain>
        <tissue>Egg</tissue>
    </source>
</reference>
<feature type="chain" id="PRO_0000086887" description="Protein EGG APPARATUS-1">
    <location>
        <begin position="1"/>
        <end position="94"/>
    </location>
</feature>
<feature type="topological domain" description="Cytoplasmic" evidence="1">
    <location>
        <begin position="1"/>
        <end position="15"/>
    </location>
</feature>
<feature type="transmembrane region" description="Helical; Signal-anchor for type II membrane protein" evidence="1">
    <location>
        <begin position="16"/>
        <end position="36"/>
    </location>
</feature>
<feature type="topological domain" description="Extracellular" evidence="1">
    <location>
        <begin position="37"/>
        <end position="94"/>
    </location>
</feature>
<gene>
    <name type="primary">Ea1</name>
</gene>
<name>EA1_MAIZE</name>
<sequence>MSSCPAIVNMKDDDGIGAMGAAVAFAAMGVFGIYFLWPVVGPTSAGMMMKAPGAAGWVICRAVFEANPQLYFTILRTAGAAAAAATFAACSIAS</sequence>
<organism>
    <name type="scientific">Zea mays</name>
    <name type="common">Maize</name>
    <dbReference type="NCBI Taxonomy" id="4577"/>
    <lineage>
        <taxon>Eukaryota</taxon>
        <taxon>Viridiplantae</taxon>
        <taxon>Streptophyta</taxon>
        <taxon>Embryophyta</taxon>
        <taxon>Tracheophyta</taxon>
        <taxon>Spermatophyta</taxon>
        <taxon>Magnoliopsida</taxon>
        <taxon>Liliopsida</taxon>
        <taxon>Poales</taxon>
        <taxon>Poaceae</taxon>
        <taxon>PACMAD clade</taxon>
        <taxon>Panicoideae</taxon>
        <taxon>Andropogonodae</taxon>
        <taxon>Andropogoneae</taxon>
        <taxon>Tripsacinae</taxon>
        <taxon>Zea</taxon>
    </lineage>
</organism>
<proteinExistence type="evidence at transcript level"/>
<dbReference type="EMBL" id="AY733074">
    <property type="protein sequence ID" value="AAW58117.1"/>
    <property type="molecule type" value="Genomic_DNA"/>
</dbReference>
<dbReference type="STRING" id="4577.Q5G8Z3"/>
<dbReference type="PaxDb" id="4577-GRMZM2G456746_P01"/>
<dbReference type="MaizeGDB" id="936188"/>
<dbReference type="eggNOG" id="ENOG502R4NJ">
    <property type="taxonomic scope" value="Eukaryota"/>
</dbReference>
<dbReference type="InParanoid" id="Q5G8Z3"/>
<dbReference type="Proteomes" id="UP000007305">
    <property type="component" value="Unplaced"/>
</dbReference>
<dbReference type="GO" id="GO:0016020">
    <property type="term" value="C:membrane"/>
    <property type="evidence" value="ECO:0007669"/>
    <property type="project" value="UniProtKB-SubCell"/>
</dbReference>
<dbReference type="InterPro" id="IPR039926">
    <property type="entry name" value="Egg_app_1"/>
</dbReference>
<dbReference type="PANTHER" id="PTHR33333">
    <property type="entry name" value="ERYTHROCYTE MEMBRANE PROTEIN 1-LIKE"/>
    <property type="match status" value="1"/>
</dbReference>
<dbReference type="PANTHER" id="PTHR33333:SF51">
    <property type="entry name" value="PROTEIN EGG APPARATUS-1"/>
    <property type="match status" value="1"/>
</dbReference>
<protein>
    <recommendedName>
        <fullName>Protein EGG APPARATUS-1</fullName>
    </recommendedName>
    <alternativeName>
        <fullName>ZmEA1</fullName>
    </alternativeName>
</protein>
<evidence type="ECO:0000255" key="1"/>
<evidence type="ECO:0000269" key="2">
    <source>
    </source>
</evidence>
<evidence type="ECO:0000305" key="3"/>
<comment type="function">
    <text>Involved in short-range signaling required for pollen tube attraction by the female gametophyte. Required for female fertility.</text>
</comment>
<comment type="subcellular location">
    <subcellularLocation>
        <location evidence="3">Membrane</location>
        <topology evidence="3">Single-pass type II membrane protein</topology>
    </subcellularLocation>
</comment>
<comment type="tissue specificity">
    <text evidence="2">Expressed only in the egg apparatus, consisting of the egg cell and two synergids. Not detected in the central cell, antipodals, and nucellar and integumental cells.</text>
</comment>
<comment type="developmental stage">
    <text evidence="2">Exclusively expressed in the mature egg cells before fertilization.</text>
</comment>
<comment type="induction">
    <text>Rapid down-regulation and/or degradation after fertilization.</text>
</comment>
<comment type="PTM">
    <text>Possible proteolysis of the C-terminal region from the predicted transmembrane domain to permit secretion and transport of the mature protein to the cell walls of the nucellus, allowing the spreading from the egg cell apparatus to the micropylar opening of the ovule.</text>
</comment>
<comment type="online information" name="Protein Spotlight">
    <link uri="https://www.proteinspotlight.org/back_issues/057"/>
    <text>Flower power - Issue 57 of April 2005</text>
</comment>
<accession>Q5G8Z3</accession>
<keyword id="KW-0278">Fertilization</keyword>
<keyword id="KW-0472">Membrane</keyword>
<keyword id="KW-1185">Reference proteome</keyword>
<keyword id="KW-0735">Signal-anchor</keyword>
<keyword id="KW-0812">Transmembrane</keyword>
<keyword id="KW-1133">Transmembrane helix</keyword>